<feature type="transit peptide" description="Mitochondrion" evidence="2">
    <location>
        <begin position="1"/>
        <end position="24"/>
    </location>
</feature>
<feature type="chain" id="PRO_0000010350" description="Succinate dehydrogenase [ubiquinone] iron-sulfur subunit, mitochondrial">
    <location>
        <begin position="25"/>
        <end position="275"/>
    </location>
</feature>
<feature type="domain" description="2Fe-2S ferredoxin-type" evidence="3">
    <location>
        <begin position="57"/>
        <end position="137"/>
    </location>
</feature>
<feature type="domain" description="4Fe-4S ferredoxin-type" evidence="4">
    <location>
        <begin position="178"/>
        <end position="208"/>
    </location>
</feature>
<feature type="binding site" evidence="3">
    <location>
        <position position="98"/>
    </location>
    <ligand>
        <name>[2Fe-2S] cluster</name>
        <dbReference type="ChEBI" id="CHEBI:190135"/>
    </ligand>
</feature>
<feature type="binding site" evidence="3">
    <location>
        <position position="103"/>
    </location>
    <ligand>
        <name>[2Fe-2S] cluster</name>
        <dbReference type="ChEBI" id="CHEBI:190135"/>
    </ligand>
</feature>
<feature type="binding site" evidence="3">
    <location>
        <position position="106"/>
    </location>
    <ligand>
        <name>[2Fe-2S] cluster</name>
        <dbReference type="ChEBI" id="CHEBI:190135"/>
    </ligand>
</feature>
<feature type="binding site" evidence="3">
    <location>
        <position position="118"/>
    </location>
    <ligand>
        <name>[2Fe-2S] cluster</name>
        <dbReference type="ChEBI" id="CHEBI:190135"/>
    </ligand>
</feature>
<feature type="binding site" evidence="1">
    <location>
        <position position="188"/>
    </location>
    <ligand>
        <name>[4Fe-4S] cluster</name>
        <dbReference type="ChEBI" id="CHEBI:49883"/>
    </ligand>
</feature>
<feature type="binding site" evidence="1">
    <location>
        <position position="191"/>
    </location>
    <ligand>
        <name>[4Fe-4S] cluster</name>
        <dbReference type="ChEBI" id="CHEBI:49883"/>
    </ligand>
</feature>
<feature type="binding site" evidence="1">
    <location>
        <position position="194"/>
    </location>
    <ligand>
        <name>[4Fe-4S] cluster</name>
        <dbReference type="ChEBI" id="CHEBI:49883"/>
    </ligand>
</feature>
<feature type="binding site" evidence="1">
    <location>
        <position position="198"/>
    </location>
    <ligand>
        <name>[3Fe-4S] cluster</name>
        <dbReference type="ChEBI" id="CHEBI:21137"/>
    </ligand>
</feature>
<feature type="binding site" evidence="1">
    <location>
        <position position="203"/>
    </location>
    <ligand>
        <name>a ubiquinone</name>
        <dbReference type="ChEBI" id="CHEBI:16389"/>
        <note>ligand shared with DHSD</note>
    </ligand>
</feature>
<feature type="binding site" evidence="1">
    <location>
        <position position="245"/>
    </location>
    <ligand>
        <name>[3Fe-4S] cluster</name>
        <dbReference type="ChEBI" id="CHEBI:21137"/>
    </ligand>
</feature>
<feature type="binding site" evidence="1">
    <location>
        <position position="251"/>
    </location>
    <ligand>
        <name>[3Fe-4S] cluster</name>
        <dbReference type="ChEBI" id="CHEBI:21137"/>
    </ligand>
</feature>
<feature type="binding site" evidence="1">
    <location>
        <position position="255"/>
    </location>
    <ligand>
        <name>[4Fe-4S] cluster</name>
        <dbReference type="ChEBI" id="CHEBI:49883"/>
    </ligand>
</feature>
<organism>
    <name type="scientific">Schizosaccharomyces pombe (strain 972 / ATCC 24843)</name>
    <name type="common">Fission yeast</name>
    <dbReference type="NCBI Taxonomy" id="284812"/>
    <lineage>
        <taxon>Eukaryota</taxon>
        <taxon>Fungi</taxon>
        <taxon>Dikarya</taxon>
        <taxon>Ascomycota</taxon>
        <taxon>Taphrinomycotina</taxon>
        <taxon>Schizosaccharomycetes</taxon>
        <taxon>Schizosaccharomycetales</taxon>
        <taxon>Schizosaccharomycetaceae</taxon>
        <taxon>Schizosaccharomyces</taxon>
    </lineage>
</organism>
<dbReference type="EC" id="1.3.5.1"/>
<dbReference type="EMBL" id="CU329670">
    <property type="protein sequence ID" value="CAB86412.2"/>
    <property type="molecule type" value="Genomic_DNA"/>
</dbReference>
<dbReference type="PIR" id="D32394">
    <property type="entry name" value="D32394"/>
</dbReference>
<dbReference type="PIR" id="T37633">
    <property type="entry name" value="T37633"/>
</dbReference>
<dbReference type="RefSeq" id="NP_593530.2">
    <property type="nucleotide sequence ID" value="NM_001018964.2"/>
</dbReference>
<dbReference type="SMR" id="P21911"/>
<dbReference type="BioGRID" id="279288">
    <property type="interactions" value="2"/>
</dbReference>
<dbReference type="ComplexPortal" id="CPX-566">
    <property type="entry name" value="Mitochondrial respiratory chain complex II"/>
</dbReference>
<dbReference type="FunCoup" id="P21911">
    <property type="interactions" value="365"/>
</dbReference>
<dbReference type="STRING" id="284812.P21911"/>
<dbReference type="iPTMnet" id="P21911"/>
<dbReference type="PaxDb" id="4896-SPAC140.01.1"/>
<dbReference type="EnsemblFungi" id="SPAC140.01.1">
    <property type="protein sequence ID" value="SPAC140.01.1:pep"/>
    <property type="gene ID" value="SPAC140.01"/>
</dbReference>
<dbReference type="GeneID" id="2542842"/>
<dbReference type="KEGG" id="spo:2542842"/>
<dbReference type="PomBase" id="SPAC140.01">
    <property type="gene designation" value="sdh2"/>
</dbReference>
<dbReference type="VEuPathDB" id="FungiDB:SPAC140.01"/>
<dbReference type="eggNOG" id="KOG3049">
    <property type="taxonomic scope" value="Eukaryota"/>
</dbReference>
<dbReference type="HOGENOM" id="CLU_044838_0_0_1"/>
<dbReference type="InParanoid" id="P21911"/>
<dbReference type="OMA" id="DGQYFGP"/>
<dbReference type="Reactome" id="R-SPO-71403">
    <property type="pathway name" value="Citric acid cycle (TCA cycle)"/>
</dbReference>
<dbReference type="UniPathway" id="UPA00223">
    <property type="reaction ID" value="UER01006"/>
</dbReference>
<dbReference type="PRO" id="PR:P21911"/>
<dbReference type="Proteomes" id="UP000002485">
    <property type="component" value="Chromosome I"/>
</dbReference>
<dbReference type="GO" id="GO:0005737">
    <property type="term" value="C:cytoplasm"/>
    <property type="evidence" value="ECO:0007005"/>
    <property type="project" value="PomBase"/>
</dbReference>
<dbReference type="GO" id="GO:0005743">
    <property type="term" value="C:mitochondrial inner membrane"/>
    <property type="evidence" value="ECO:0000266"/>
    <property type="project" value="ComplexPortal"/>
</dbReference>
<dbReference type="GO" id="GO:0031966">
    <property type="term" value="C:mitochondrial membrane"/>
    <property type="evidence" value="ECO:0000318"/>
    <property type="project" value="GO_Central"/>
</dbReference>
<dbReference type="GO" id="GO:0045273">
    <property type="term" value="C:respiratory chain complex II (succinate dehydrogenase)"/>
    <property type="evidence" value="ECO:0000250"/>
    <property type="project" value="PomBase"/>
</dbReference>
<dbReference type="GO" id="GO:0051537">
    <property type="term" value="F:2 iron, 2 sulfur cluster binding"/>
    <property type="evidence" value="ECO:0007669"/>
    <property type="project" value="UniProtKB-KW"/>
</dbReference>
<dbReference type="GO" id="GO:0051538">
    <property type="term" value="F:3 iron, 4 sulfur cluster binding"/>
    <property type="evidence" value="ECO:0007669"/>
    <property type="project" value="UniProtKB-KW"/>
</dbReference>
<dbReference type="GO" id="GO:0051539">
    <property type="term" value="F:4 iron, 4 sulfur cluster binding"/>
    <property type="evidence" value="ECO:0007669"/>
    <property type="project" value="UniProtKB-KW"/>
</dbReference>
<dbReference type="GO" id="GO:0009055">
    <property type="term" value="F:electron transfer activity"/>
    <property type="evidence" value="ECO:0007669"/>
    <property type="project" value="InterPro"/>
</dbReference>
<dbReference type="GO" id="GO:0046872">
    <property type="term" value="F:metal ion binding"/>
    <property type="evidence" value="ECO:0007669"/>
    <property type="project" value="UniProtKB-KW"/>
</dbReference>
<dbReference type="GO" id="GO:0008177">
    <property type="term" value="F:succinate dehydrogenase (quinone) activity"/>
    <property type="evidence" value="ECO:0007669"/>
    <property type="project" value="UniProtKB-EC"/>
</dbReference>
<dbReference type="GO" id="GO:0009060">
    <property type="term" value="P:aerobic respiration"/>
    <property type="evidence" value="ECO:0000318"/>
    <property type="project" value="GO_Central"/>
</dbReference>
<dbReference type="GO" id="GO:0006121">
    <property type="term" value="P:mitochondrial electron transport, succinate to ubiquinone"/>
    <property type="evidence" value="ECO:0000250"/>
    <property type="project" value="PomBase"/>
</dbReference>
<dbReference type="GO" id="GO:0022904">
    <property type="term" value="P:respiratory electron transport chain"/>
    <property type="evidence" value="ECO:0000318"/>
    <property type="project" value="GO_Central"/>
</dbReference>
<dbReference type="GO" id="GO:0006099">
    <property type="term" value="P:tricarboxylic acid cycle"/>
    <property type="evidence" value="ECO:0000250"/>
    <property type="project" value="PomBase"/>
</dbReference>
<dbReference type="FunFam" id="3.10.20.30:FF:000007">
    <property type="entry name" value="Succinate dehydrogenase [ubiquinone] iron-sulfur subunit, mitochondrial"/>
    <property type="match status" value="1"/>
</dbReference>
<dbReference type="FunFam" id="1.10.1060.10:FF:000001">
    <property type="entry name" value="Succinate dehydrogenase iron-sulfur subunit SdhB"/>
    <property type="match status" value="1"/>
</dbReference>
<dbReference type="Gene3D" id="3.10.20.30">
    <property type="match status" value="1"/>
</dbReference>
<dbReference type="Gene3D" id="1.10.1060.10">
    <property type="entry name" value="Alpha-helical ferredoxin"/>
    <property type="match status" value="1"/>
</dbReference>
<dbReference type="InterPro" id="IPR036010">
    <property type="entry name" value="2Fe-2S_ferredoxin-like_sf"/>
</dbReference>
<dbReference type="InterPro" id="IPR001041">
    <property type="entry name" value="2Fe-2S_ferredoxin-type"/>
</dbReference>
<dbReference type="InterPro" id="IPR006058">
    <property type="entry name" value="2Fe2S_fd_BS"/>
</dbReference>
<dbReference type="InterPro" id="IPR017896">
    <property type="entry name" value="4Fe4S_Fe-S-bd"/>
</dbReference>
<dbReference type="InterPro" id="IPR017900">
    <property type="entry name" value="4Fe4S_Fe_S_CS"/>
</dbReference>
<dbReference type="InterPro" id="IPR012675">
    <property type="entry name" value="Beta-grasp_dom_sf"/>
</dbReference>
<dbReference type="InterPro" id="IPR009051">
    <property type="entry name" value="Helical_ferredxn"/>
</dbReference>
<dbReference type="InterPro" id="IPR050573">
    <property type="entry name" value="SDH/FRD_Iron-Sulfur"/>
</dbReference>
<dbReference type="InterPro" id="IPR004489">
    <property type="entry name" value="Succ_DH/fum_Rdtase_Fe-S"/>
</dbReference>
<dbReference type="InterPro" id="IPR025192">
    <property type="entry name" value="Succ_DH/fum_Rdtase_N"/>
</dbReference>
<dbReference type="NCBIfam" id="TIGR00384">
    <property type="entry name" value="dhsB"/>
    <property type="match status" value="1"/>
</dbReference>
<dbReference type="NCBIfam" id="NF004616">
    <property type="entry name" value="PRK05950.1"/>
    <property type="match status" value="1"/>
</dbReference>
<dbReference type="PANTHER" id="PTHR11921:SF29">
    <property type="entry name" value="SUCCINATE DEHYDROGENASE [UBIQUINONE] IRON-SULFUR SUBUNIT, MITOCHONDRIAL"/>
    <property type="match status" value="1"/>
</dbReference>
<dbReference type="PANTHER" id="PTHR11921">
    <property type="entry name" value="SUCCINATE DEHYDROGENASE IRON-SULFUR PROTEIN"/>
    <property type="match status" value="1"/>
</dbReference>
<dbReference type="Pfam" id="PF13085">
    <property type="entry name" value="Fer2_3"/>
    <property type="match status" value="1"/>
</dbReference>
<dbReference type="Pfam" id="PF13534">
    <property type="entry name" value="Fer4_17"/>
    <property type="match status" value="1"/>
</dbReference>
<dbReference type="SUPFAM" id="SSF54292">
    <property type="entry name" value="2Fe-2S ferredoxin-like"/>
    <property type="match status" value="1"/>
</dbReference>
<dbReference type="SUPFAM" id="SSF46548">
    <property type="entry name" value="alpha-helical ferredoxin"/>
    <property type="match status" value="1"/>
</dbReference>
<dbReference type="PROSITE" id="PS00197">
    <property type="entry name" value="2FE2S_FER_1"/>
    <property type="match status" value="1"/>
</dbReference>
<dbReference type="PROSITE" id="PS51085">
    <property type="entry name" value="2FE2S_FER_2"/>
    <property type="match status" value="1"/>
</dbReference>
<dbReference type="PROSITE" id="PS00198">
    <property type="entry name" value="4FE4S_FER_1"/>
    <property type="match status" value="1"/>
</dbReference>
<dbReference type="PROSITE" id="PS51379">
    <property type="entry name" value="4FE4S_FER_2"/>
    <property type="match status" value="1"/>
</dbReference>
<name>SDHB_SCHPO</name>
<keyword id="KW-0001">2Fe-2S</keyword>
<keyword id="KW-0003">3Fe-4S</keyword>
<keyword id="KW-0004">4Fe-4S</keyword>
<keyword id="KW-0249">Electron transport</keyword>
<keyword id="KW-0408">Iron</keyword>
<keyword id="KW-0411">Iron-sulfur</keyword>
<keyword id="KW-0472">Membrane</keyword>
<keyword id="KW-0479">Metal-binding</keyword>
<keyword id="KW-0496">Mitochondrion</keyword>
<keyword id="KW-0999">Mitochondrion inner membrane</keyword>
<keyword id="KW-0560">Oxidoreductase</keyword>
<keyword id="KW-1185">Reference proteome</keyword>
<keyword id="KW-0809">Transit peptide</keyword>
<keyword id="KW-0813">Transport</keyword>
<keyword id="KW-0816">Tricarboxylic acid cycle</keyword>
<sequence>MFSRRIQVLSPFLKHFVNRNARMMATEANISATSANPQSQGENLKTFEIYRWNPEKPEVKPKLQKYTVDLTKCGPMVLDALIKIKNEQDPTLTFRRSCREGICGSCAMNINGSNTLACICNIKKDNKPTKIYPLPHCFIVKDLVPDLTYFYKQYKSIEPWLQNDNIPKDKEFYQSRADRAKLDGLYECILCACCSTSCPSYWWNSEEYLGPAVLMQAYRWIIDSRDQATAKRLDVMQNSMSVYRCHTIMNCARTCPKGLNPGLAIAKVKALMATA</sequence>
<reference key="1">
    <citation type="journal article" date="2002" name="Nature">
        <title>The genome sequence of Schizosaccharomyces pombe.</title>
        <authorList>
            <person name="Wood V."/>
            <person name="Gwilliam R."/>
            <person name="Rajandream M.A."/>
            <person name="Lyne M.H."/>
            <person name="Lyne R."/>
            <person name="Stewart A."/>
            <person name="Sgouros J.G."/>
            <person name="Peat N."/>
            <person name="Hayles J."/>
            <person name="Baker S.G."/>
            <person name="Basham D."/>
            <person name="Bowman S."/>
            <person name="Brooks K."/>
            <person name="Brown D."/>
            <person name="Brown S."/>
            <person name="Chillingworth T."/>
            <person name="Churcher C.M."/>
            <person name="Collins M."/>
            <person name="Connor R."/>
            <person name="Cronin A."/>
            <person name="Davis P."/>
            <person name="Feltwell T."/>
            <person name="Fraser A."/>
            <person name="Gentles S."/>
            <person name="Goble A."/>
            <person name="Hamlin N."/>
            <person name="Harris D.E."/>
            <person name="Hidalgo J."/>
            <person name="Hodgson G."/>
            <person name="Holroyd S."/>
            <person name="Hornsby T."/>
            <person name="Howarth S."/>
            <person name="Huckle E.J."/>
            <person name="Hunt S."/>
            <person name="Jagels K."/>
            <person name="James K.D."/>
            <person name="Jones L."/>
            <person name="Jones M."/>
            <person name="Leather S."/>
            <person name="McDonald S."/>
            <person name="McLean J."/>
            <person name="Mooney P."/>
            <person name="Moule S."/>
            <person name="Mungall K.L."/>
            <person name="Murphy L.D."/>
            <person name="Niblett D."/>
            <person name="Odell C."/>
            <person name="Oliver K."/>
            <person name="O'Neil S."/>
            <person name="Pearson D."/>
            <person name="Quail M.A."/>
            <person name="Rabbinowitsch E."/>
            <person name="Rutherford K.M."/>
            <person name="Rutter S."/>
            <person name="Saunders D."/>
            <person name="Seeger K."/>
            <person name="Sharp S."/>
            <person name="Skelton J."/>
            <person name="Simmonds M.N."/>
            <person name="Squares R."/>
            <person name="Squares S."/>
            <person name="Stevens K."/>
            <person name="Taylor K."/>
            <person name="Taylor R.G."/>
            <person name="Tivey A."/>
            <person name="Walsh S.V."/>
            <person name="Warren T."/>
            <person name="Whitehead S."/>
            <person name="Woodward J.R."/>
            <person name="Volckaert G."/>
            <person name="Aert R."/>
            <person name="Robben J."/>
            <person name="Grymonprez B."/>
            <person name="Weltjens I."/>
            <person name="Vanstreels E."/>
            <person name="Rieger M."/>
            <person name="Schaefer M."/>
            <person name="Mueller-Auer S."/>
            <person name="Gabel C."/>
            <person name="Fuchs M."/>
            <person name="Duesterhoeft A."/>
            <person name="Fritzc C."/>
            <person name="Holzer E."/>
            <person name="Moestl D."/>
            <person name="Hilbert H."/>
            <person name="Borzym K."/>
            <person name="Langer I."/>
            <person name="Beck A."/>
            <person name="Lehrach H."/>
            <person name="Reinhardt R."/>
            <person name="Pohl T.M."/>
            <person name="Eger P."/>
            <person name="Zimmermann W."/>
            <person name="Wedler H."/>
            <person name="Wambutt R."/>
            <person name="Purnelle B."/>
            <person name="Goffeau A."/>
            <person name="Cadieu E."/>
            <person name="Dreano S."/>
            <person name="Gloux S."/>
            <person name="Lelaure V."/>
            <person name="Mottier S."/>
            <person name="Galibert F."/>
            <person name="Aves S.J."/>
            <person name="Xiang Z."/>
            <person name="Hunt C."/>
            <person name="Moore K."/>
            <person name="Hurst S.M."/>
            <person name="Lucas M."/>
            <person name="Rochet M."/>
            <person name="Gaillardin C."/>
            <person name="Tallada V.A."/>
            <person name="Garzon A."/>
            <person name="Thode G."/>
            <person name="Daga R.R."/>
            <person name="Cruzado L."/>
            <person name="Jimenez J."/>
            <person name="Sanchez M."/>
            <person name="del Rey F."/>
            <person name="Benito J."/>
            <person name="Dominguez A."/>
            <person name="Revuelta J.L."/>
            <person name="Moreno S."/>
            <person name="Armstrong J."/>
            <person name="Forsburg S.L."/>
            <person name="Cerutti L."/>
            <person name="Lowe T."/>
            <person name="McCombie W.R."/>
            <person name="Paulsen I."/>
            <person name="Potashkin J."/>
            <person name="Shpakovski G.V."/>
            <person name="Ussery D."/>
            <person name="Barrell B.G."/>
            <person name="Nurse P."/>
        </authorList>
    </citation>
    <scope>NUCLEOTIDE SEQUENCE [LARGE SCALE GENOMIC DNA]</scope>
    <source>
        <strain>972 / ATCC 24843</strain>
    </source>
</reference>
<reference key="2">
    <citation type="journal article" date="2011" name="Science">
        <title>Comparative functional genomics of the fission yeasts.</title>
        <authorList>
            <person name="Rhind N."/>
            <person name="Chen Z."/>
            <person name="Yassour M."/>
            <person name="Thompson D.A."/>
            <person name="Haas B.J."/>
            <person name="Habib N."/>
            <person name="Wapinski I."/>
            <person name="Roy S."/>
            <person name="Lin M.F."/>
            <person name="Heiman D.I."/>
            <person name="Young S.K."/>
            <person name="Furuya K."/>
            <person name="Guo Y."/>
            <person name="Pidoux A."/>
            <person name="Chen H.M."/>
            <person name="Robbertse B."/>
            <person name="Goldberg J.M."/>
            <person name="Aoki K."/>
            <person name="Bayne E.H."/>
            <person name="Berlin A.M."/>
            <person name="Desjardins C.A."/>
            <person name="Dobbs E."/>
            <person name="Dukaj L."/>
            <person name="Fan L."/>
            <person name="FitzGerald M.G."/>
            <person name="French C."/>
            <person name="Gujja S."/>
            <person name="Hansen K."/>
            <person name="Keifenheim D."/>
            <person name="Levin J.Z."/>
            <person name="Mosher R.A."/>
            <person name="Mueller C.A."/>
            <person name="Pfiffner J."/>
            <person name="Priest M."/>
            <person name="Russ C."/>
            <person name="Smialowska A."/>
            <person name="Swoboda P."/>
            <person name="Sykes S.M."/>
            <person name="Vaughn M."/>
            <person name="Vengrova S."/>
            <person name="Yoder R."/>
            <person name="Zeng Q."/>
            <person name="Allshire R."/>
            <person name="Baulcombe D."/>
            <person name="Birren B.W."/>
            <person name="Brown W."/>
            <person name="Ekwall K."/>
            <person name="Kellis M."/>
            <person name="Leatherwood J."/>
            <person name="Levin H."/>
            <person name="Margalit H."/>
            <person name="Martienssen R."/>
            <person name="Nieduszynski C.A."/>
            <person name="Spatafora J.W."/>
            <person name="Friedman N."/>
            <person name="Dalgaard J.Z."/>
            <person name="Baumann P."/>
            <person name="Niki H."/>
            <person name="Regev A."/>
            <person name="Nusbaum C."/>
        </authorList>
    </citation>
    <scope>REVISION OF GENE MODEL</scope>
</reference>
<reference key="3">
    <citation type="journal article" date="1989" name="Proc. Natl. Acad. Sci. U.S.A.">
        <title>Use of the DNA polymerase chain reaction for homology probing: isolation of partial cDNA or genomic clones encoding the iron-sulfur protein of succinate dehydrogenase from several species.</title>
        <authorList>
            <person name="Gould S.J."/>
            <person name="Subramani S."/>
            <person name="Scheffler I.E."/>
        </authorList>
    </citation>
    <scope>NUCLEOTIDE SEQUENCE [GENOMIC DNA] OF 112-251</scope>
</reference>
<reference key="4">
    <citation type="journal article" date="1993" name="Proc. Natl. Acad. Sci. U.S.A.">
        <authorList>
            <person name="Gould S.J."/>
            <person name="Subramani S."/>
            <person name="Scheffler I.E."/>
        </authorList>
    </citation>
    <scope>ERRATUM OF PUBMED:2494655</scope>
</reference>
<evidence type="ECO:0000250" key="1"/>
<evidence type="ECO:0000255" key="2"/>
<evidence type="ECO:0000255" key="3">
    <source>
        <dbReference type="PROSITE-ProRule" id="PRU00465"/>
    </source>
</evidence>
<evidence type="ECO:0000255" key="4">
    <source>
        <dbReference type="PROSITE-ProRule" id="PRU00711"/>
    </source>
</evidence>
<evidence type="ECO:0000305" key="5"/>
<gene>
    <name type="primary">sdh2</name>
    <name type="ORF">SPAC140.01</name>
</gene>
<proteinExistence type="inferred from homology"/>
<accession>P21911</accession>
<accession>P21915</accession>
<comment type="function">
    <text evidence="1">Iron-sulfur protein (IP) subunit of succinate dehydrogenase (SDH) that is involved in complex II of the mitochondrial electron transport chain and is responsible for transferring electrons from succinate to ubiquinone (coenzyme Q).</text>
</comment>
<comment type="catalytic activity">
    <reaction>
        <text>a quinone + succinate = fumarate + a quinol</text>
        <dbReference type="Rhea" id="RHEA:40523"/>
        <dbReference type="ChEBI" id="CHEBI:24646"/>
        <dbReference type="ChEBI" id="CHEBI:29806"/>
        <dbReference type="ChEBI" id="CHEBI:30031"/>
        <dbReference type="ChEBI" id="CHEBI:132124"/>
        <dbReference type="EC" id="1.3.5.1"/>
    </reaction>
</comment>
<comment type="cofactor">
    <cofactor evidence="1">
        <name>[2Fe-2S] cluster</name>
        <dbReference type="ChEBI" id="CHEBI:190135"/>
    </cofactor>
    <text evidence="1">Binds 1 [2Fe-2S] cluster.</text>
</comment>
<comment type="cofactor">
    <cofactor evidence="1">
        <name>[3Fe-4S] cluster</name>
        <dbReference type="ChEBI" id="CHEBI:21137"/>
    </cofactor>
    <text evidence="1">Binds 1 [3Fe-4S] cluster.</text>
</comment>
<comment type="cofactor">
    <cofactor evidence="1">
        <name>[4Fe-4S] cluster</name>
        <dbReference type="ChEBI" id="CHEBI:49883"/>
    </cofactor>
    <text evidence="1">Binds 1 [4Fe-4S] cluster.</text>
</comment>
<comment type="pathway">
    <text>Carbohydrate metabolism; tricarboxylic acid cycle; fumarate from succinate (eukaryal route): step 1/1.</text>
</comment>
<comment type="subunit">
    <text evidence="1">Component of complex II composed of four subunits: a flavoprotein (FP), an iron-sulfur protein (IP), and a cytochrome b composed of a large and a small subunit.</text>
</comment>
<comment type="subcellular location">
    <subcellularLocation>
        <location evidence="1">Mitochondrion inner membrane</location>
        <topology evidence="1">Peripheral membrane protein</topology>
        <orientation evidence="1">Matrix side</orientation>
    </subcellularLocation>
</comment>
<comment type="similarity">
    <text evidence="5">Belongs to the succinate dehydrogenase/fumarate reductase iron-sulfur protein family.</text>
</comment>
<protein>
    <recommendedName>
        <fullName>Succinate dehydrogenase [ubiquinone] iron-sulfur subunit, mitochondrial</fullName>
        <ecNumber>1.3.5.1</ecNumber>
    </recommendedName>
    <alternativeName>
        <fullName>Iron-sulfur subunit of complex II</fullName>
        <shortName>Ip</shortName>
    </alternativeName>
</protein>